<organism>
    <name type="scientific">Vibrio campbellii (strain ATCC BAA-1116)</name>
    <dbReference type="NCBI Taxonomy" id="2902295"/>
    <lineage>
        <taxon>Bacteria</taxon>
        <taxon>Pseudomonadati</taxon>
        <taxon>Pseudomonadota</taxon>
        <taxon>Gammaproteobacteria</taxon>
        <taxon>Vibrionales</taxon>
        <taxon>Vibrionaceae</taxon>
        <taxon>Vibrio</taxon>
    </lineage>
</organism>
<protein>
    <recommendedName>
        <fullName evidence="1">NAD-dependent malic enzyme</fullName>
        <shortName evidence="1">NAD-ME</shortName>
        <ecNumber evidence="1">1.1.1.38</ecNumber>
    </recommendedName>
</protein>
<proteinExistence type="inferred from homology"/>
<name>MAO1_VIBC1</name>
<comment type="catalytic activity">
    <reaction evidence="1">
        <text>(S)-malate + NAD(+) = pyruvate + CO2 + NADH</text>
        <dbReference type="Rhea" id="RHEA:12653"/>
        <dbReference type="ChEBI" id="CHEBI:15361"/>
        <dbReference type="ChEBI" id="CHEBI:15589"/>
        <dbReference type="ChEBI" id="CHEBI:16526"/>
        <dbReference type="ChEBI" id="CHEBI:57540"/>
        <dbReference type="ChEBI" id="CHEBI:57945"/>
        <dbReference type="EC" id="1.1.1.38"/>
    </reaction>
</comment>
<comment type="catalytic activity">
    <reaction evidence="1">
        <text>oxaloacetate + H(+) = pyruvate + CO2</text>
        <dbReference type="Rhea" id="RHEA:15641"/>
        <dbReference type="ChEBI" id="CHEBI:15361"/>
        <dbReference type="ChEBI" id="CHEBI:15378"/>
        <dbReference type="ChEBI" id="CHEBI:16452"/>
        <dbReference type="ChEBI" id="CHEBI:16526"/>
        <dbReference type="EC" id="1.1.1.38"/>
    </reaction>
</comment>
<comment type="cofactor">
    <cofactor evidence="1">
        <name>Mg(2+)</name>
        <dbReference type="ChEBI" id="CHEBI:18420"/>
    </cofactor>
    <cofactor evidence="1">
        <name>Mn(2+)</name>
        <dbReference type="ChEBI" id="CHEBI:29035"/>
    </cofactor>
    <text evidence="1">Divalent metal cations. Prefers magnesium or manganese.</text>
</comment>
<comment type="subunit">
    <text evidence="1">Homotetramer.</text>
</comment>
<comment type="similarity">
    <text evidence="1">Belongs to the malic enzymes family.</text>
</comment>
<feature type="chain" id="PRO_1000069551" description="NAD-dependent malic enzyme">
    <location>
        <begin position="1"/>
        <end position="562"/>
    </location>
</feature>
<feature type="active site" description="Proton donor" evidence="1">
    <location>
        <position position="101"/>
    </location>
</feature>
<feature type="active site" description="Proton acceptor" evidence="1">
    <location>
        <position position="172"/>
    </location>
</feature>
<feature type="binding site" evidence="1">
    <location>
        <position position="154"/>
    </location>
    <ligand>
        <name>NAD(+)</name>
        <dbReference type="ChEBI" id="CHEBI:57540"/>
    </ligand>
</feature>
<feature type="binding site" evidence="1">
    <location>
        <position position="243"/>
    </location>
    <ligand>
        <name>a divalent metal cation</name>
        <dbReference type="ChEBI" id="CHEBI:60240"/>
    </ligand>
</feature>
<feature type="binding site" evidence="1">
    <location>
        <position position="244"/>
    </location>
    <ligand>
        <name>a divalent metal cation</name>
        <dbReference type="ChEBI" id="CHEBI:60240"/>
    </ligand>
</feature>
<feature type="binding site" evidence="1">
    <location>
        <position position="267"/>
    </location>
    <ligand>
        <name>a divalent metal cation</name>
        <dbReference type="ChEBI" id="CHEBI:60240"/>
    </ligand>
</feature>
<feature type="binding site" evidence="1">
    <location>
        <position position="267"/>
    </location>
    <ligand>
        <name>NAD(+)</name>
        <dbReference type="ChEBI" id="CHEBI:57540"/>
    </ligand>
</feature>
<feature type="binding site" evidence="1">
    <location>
        <position position="415"/>
    </location>
    <ligand>
        <name>NAD(+)</name>
        <dbReference type="ChEBI" id="CHEBI:57540"/>
    </ligand>
</feature>
<feature type="site" description="Important for activity" evidence="1">
    <location>
        <position position="267"/>
    </location>
</feature>
<gene>
    <name evidence="1" type="primary">maeA</name>
    <name type="ordered locus">VIBHAR_02034</name>
</gene>
<evidence type="ECO:0000255" key="1">
    <source>
        <dbReference type="HAMAP-Rule" id="MF_01619"/>
    </source>
</evidence>
<keyword id="KW-0479">Metal-binding</keyword>
<keyword id="KW-0520">NAD</keyword>
<keyword id="KW-0560">Oxidoreductase</keyword>
<sequence>MNNDKRPLYIPYAGPALLATPLLNKGSAFSGEERSSFNLEGLLPETTETIQEQVERAYQQYKSFESDMDKHIYLRNIQDTNETLYYRLVQNHISEMMPIIYTPTVGAACENFSNIYRRGRGLFISYPNRDRIDDLLNNAANHNVKVIVVTDGERILGLGDQGIGGMGIPIGKLSLYTACGGISPAYTLPIVLDVGTNNPQRLADPMYMGWRHPRITGPDYDAFVEEFIQAVQRRWPDALIQFEDFAQKNAMPLLERYKDRICCFNDDIQGTAAVTVGSLLAACKAAGTKLSDQRITFLGAGSAGCGIAEAIIAQMVSEGISDEKARSQVYMVDRWGLLQEGMPNLLDFQQRLVQKFDNTKKWENEGNGFSLLDVMHNAKPTILIGVSGAPGLFSEEVIKEMHKHCKRPIVFPLSNPTSRVEATPNDIIRWTNGEALVATGSPFEPVVHEGRSYPIAQCNNSYIFPGIGLGVLAVNAKRVTDEMLMESSRALATCSPLAINGNGALLPPLEEIHLVSKKIAFAVAKKAIEQGVALEITDEALNDAIDQAFWQPVYRRYKRTAF</sequence>
<accession>A7N025</accession>
<reference key="1">
    <citation type="submission" date="2007-08" db="EMBL/GenBank/DDBJ databases">
        <authorList>
            <consortium name="The Vibrio harveyi Genome Sequencing Project"/>
            <person name="Bassler B."/>
            <person name="Clifton S.W."/>
            <person name="Fulton L."/>
            <person name="Delehaunty K."/>
            <person name="Fronick C."/>
            <person name="Harrison M."/>
            <person name="Markivic C."/>
            <person name="Fulton R."/>
            <person name="Tin-Wollam A.-M."/>
            <person name="Shah N."/>
            <person name="Pepin K."/>
            <person name="Nash W."/>
            <person name="Thiruvilangam P."/>
            <person name="Bhonagiri V."/>
            <person name="Waters C."/>
            <person name="Tu K.C."/>
            <person name="Irgon J."/>
            <person name="Wilson R.K."/>
        </authorList>
    </citation>
    <scope>NUCLEOTIDE SEQUENCE [LARGE SCALE GENOMIC DNA]</scope>
    <source>
        <strain>ATCC BAA-1116 / BB120</strain>
    </source>
</reference>
<dbReference type="EC" id="1.1.1.38" evidence="1"/>
<dbReference type="EMBL" id="CP000789">
    <property type="protein sequence ID" value="ABU70999.1"/>
    <property type="molecule type" value="Genomic_DNA"/>
</dbReference>
<dbReference type="RefSeq" id="WP_005533465.1">
    <property type="nucleotide sequence ID" value="NC_022269.1"/>
</dbReference>
<dbReference type="SMR" id="A7N025"/>
<dbReference type="KEGG" id="vha:VIBHAR_02034"/>
<dbReference type="PATRIC" id="fig|338187.25.peg.655"/>
<dbReference type="Proteomes" id="UP000008152">
    <property type="component" value="Chromosome I"/>
</dbReference>
<dbReference type="GO" id="GO:0005829">
    <property type="term" value="C:cytosol"/>
    <property type="evidence" value="ECO:0007669"/>
    <property type="project" value="TreeGrafter"/>
</dbReference>
<dbReference type="GO" id="GO:0004471">
    <property type="term" value="F:malate dehydrogenase (decarboxylating) (NAD+) activity"/>
    <property type="evidence" value="ECO:0007669"/>
    <property type="project" value="UniProtKB-UniRule"/>
</dbReference>
<dbReference type="GO" id="GO:0046872">
    <property type="term" value="F:metal ion binding"/>
    <property type="evidence" value="ECO:0007669"/>
    <property type="project" value="UniProtKB-KW"/>
</dbReference>
<dbReference type="GO" id="GO:0051287">
    <property type="term" value="F:NAD binding"/>
    <property type="evidence" value="ECO:0007669"/>
    <property type="project" value="InterPro"/>
</dbReference>
<dbReference type="GO" id="GO:0008948">
    <property type="term" value="F:oxaloacetate decarboxylase activity"/>
    <property type="evidence" value="ECO:0007669"/>
    <property type="project" value="UniProtKB-UniRule"/>
</dbReference>
<dbReference type="GO" id="GO:0006108">
    <property type="term" value="P:malate metabolic process"/>
    <property type="evidence" value="ECO:0007669"/>
    <property type="project" value="TreeGrafter"/>
</dbReference>
<dbReference type="CDD" id="cd05312">
    <property type="entry name" value="NAD_bind_1_malic_enz"/>
    <property type="match status" value="1"/>
</dbReference>
<dbReference type="FunFam" id="3.40.50.10380:FF:000001">
    <property type="entry name" value="NAD-dependent malic enzyme"/>
    <property type="match status" value="1"/>
</dbReference>
<dbReference type="FunFam" id="3.40.50.720:FF:000055">
    <property type="entry name" value="NAD-dependent malic enzyme"/>
    <property type="match status" value="1"/>
</dbReference>
<dbReference type="Gene3D" id="3.40.50.10380">
    <property type="entry name" value="Malic enzyme, N-terminal domain"/>
    <property type="match status" value="1"/>
</dbReference>
<dbReference type="Gene3D" id="3.40.50.720">
    <property type="entry name" value="NAD(P)-binding Rossmann-like Domain"/>
    <property type="match status" value="1"/>
</dbReference>
<dbReference type="HAMAP" id="MF_01619">
    <property type="entry name" value="NAD_malic_enz"/>
    <property type="match status" value="1"/>
</dbReference>
<dbReference type="InterPro" id="IPR046346">
    <property type="entry name" value="Aminoacid_DH-like_N_sf"/>
</dbReference>
<dbReference type="InterPro" id="IPR015884">
    <property type="entry name" value="Malic_enzyme_CS"/>
</dbReference>
<dbReference type="InterPro" id="IPR012301">
    <property type="entry name" value="Malic_N_dom"/>
</dbReference>
<dbReference type="InterPro" id="IPR037062">
    <property type="entry name" value="Malic_N_dom_sf"/>
</dbReference>
<dbReference type="InterPro" id="IPR012302">
    <property type="entry name" value="Malic_NAD-bd"/>
</dbReference>
<dbReference type="InterPro" id="IPR001891">
    <property type="entry name" value="Malic_OxRdtase"/>
</dbReference>
<dbReference type="InterPro" id="IPR036291">
    <property type="entry name" value="NAD(P)-bd_dom_sf"/>
</dbReference>
<dbReference type="InterPro" id="IPR023667">
    <property type="entry name" value="NAD_malic_enz_proteobac"/>
</dbReference>
<dbReference type="NCBIfam" id="NF010052">
    <property type="entry name" value="PRK13529.1"/>
    <property type="match status" value="1"/>
</dbReference>
<dbReference type="PANTHER" id="PTHR23406">
    <property type="entry name" value="MALIC ENZYME-RELATED"/>
    <property type="match status" value="1"/>
</dbReference>
<dbReference type="PANTHER" id="PTHR23406:SF34">
    <property type="entry name" value="NAD-DEPENDENT MALIC ENZYME, MITOCHONDRIAL"/>
    <property type="match status" value="1"/>
</dbReference>
<dbReference type="Pfam" id="PF00390">
    <property type="entry name" value="malic"/>
    <property type="match status" value="1"/>
</dbReference>
<dbReference type="Pfam" id="PF03949">
    <property type="entry name" value="Malic_M"/>
    <property type="match status" value="1"/>
</dbReference>
<dbReference type="PIRSF" id="PIRSF000106">
    <property type="entry name" value="ME"/>
    <property type="match status" value="1"/>
</dbReference>
<dbReference type="PRINTS" id="PR00072">
    <property type="entry name" value="MALOXRDTASE"/>
</dbReference>
<dbReference type="SMART" id="SM01274">
    <property type="entry name" value="malic"/>
    <property type="match status" value="1"/>
</dbReference>
<dbReference type="SMART" id="SM00919">
    <property type="entry name" value="Malic_M"/>
    <property type="match status" value="1"/>
</dbReference>
<dbReference type="SUPFAM" id="SSF53223">
    <property type="entry name" value="Aminoacid dehydrogenase-like, N-terminal domain"/>
    <property type="match status" value="1"/>
</dbReference>
<dbReference type="SUPFAM" id="SSF51735">
    <property type="entry name" value="NAD(P)-binding Rossmann-fold domains"/>
    <property type="match status" value="1"/>
</dbReference>
<dbReference type="PROSITE" id="PS00331">
    <property type="entry name" value="MALIC_ENZYMES"/>
    <property type="match status" value="1"/>
</dbReference>